<gene>
    <name evidence="1" type="primary">lpxK</name>
    <name type="ordered locus">VC0395_A1468</name>
    <name type="ordered locus">VC395_1992</name>
</gene>
<accession>A5F728</accession>
<accession>C3M1R9</accession>
<comment type="function">
    <text evidence="1">Transfers the gamma-phosphate of ATP to the 4'-position of a tetraacyldisaccharide 1-phosphate intermediate (termed DS-1-P) to form tetraacyldisaccharide 1,4'-bis-phosphate (lipid IVA).</text>
</comment>
<comment type="catalytic activity">
    <reaction evidence="1">
        <text>a lipid A disaccharide + ATP = a lipid IVA + ADP + H(+)</text>
        <dbReference type="Rhea" id="RHEA:67840"/>
        <dbReference type="ChEBI" id="CHEBI:15378"/>
        <dbReference type="ChEBI" id="CHEBI:30616"/>
        <dbReference type="ChEBI" id="CHEBI:176343"/>
        <dbReference type="ChEBI" id="CHEBI:176425"/>
        <dbReference type="ChEBI" id="CHEBI:456216"/>
        <dbReference type="EC" id="2.7.1.130"/>
    </reaction>
</comment>
<comment type="pathway">
    <text evidence="1">Glycolipid biosynthesis; lipid IV(A) biosynthesis; lipid IV(A) from (3R)-3-hydroxytetradecanoyl-[acyl-carrier-protein] and UDP-N-acetyl-alpha-D-glucosamine: step 6/6.</text>
</comment>
<comment type="similarity">
    <text evidence="1">Belongs to the LpxK family.</text>
</comment>
<comment type="sequence caution" evidence="2">
    <conflict type="erroneous initiation">
        <sequence resource="EMBL-CDS" id="ABQ21048"/>
    </conflict>
</comment>
<comment type="sequence caution" evidence="2">
    <conflict type="erroneous initiation">
        <sequence resource="EMBL-CDS" id="ACP09985"/>
    </conflict>
</comment>
<proteinExistence type="inferred from homology"/>
<evidence type="ECO:0000255" key="1">
    <source>
        <dbReference type="HAMAP-Rule" id="MF_00409"/>
    </source>
</evidence>
<evidence type="ECO:0000305" key="2"/>
<name>LPXK_VIBC3</name>
<organism>
    <name type="scientific">Vibrio cholerae serotype O1 (strain ATCC 39541 / Classical Ogawa 395 / O395)</name>
    <dbReference type="NCBI Taxonomy" id="345073"/>
    <lineage>
        <taxon>Bacteria</taxon>
        <taxon>Pseudomonadati</taxon>
        <taxon>Pseudomonadota</taxon>
        <taxon>Gammaproteobacteria</taxon>
        <taxon>Vibrionales</taxon>
        <taxon>Vibrionaceae</taxon>
        <taxon>Vibrio</taxon>
    </lineage>
</organism>
<dbReference type="EC" id="2.7.1.130" evidence="1"/>
<dbReference type="EMBL" id="CP000627">
    <property type="protein sequence ID" value="ABQ21048.1"/>
    <property type="status" value="ALT_INIT"/>
    <property type="molecule type" value="Genomic_DNA"/>
</dbReference>
<dbReference type="EMBL" id="CP001235">
    <property type="protein sequence ID" value="ACP09985.1"/>
    <property type="status" value="ALT_INIT"/>
    <property type="molecule type" value="Genomic_DNA"/>
</dbReference>
<dbReference type="RefSeq" id="WP_002034410.1">
    <property type="nucleotide sequence ID" value="NZ_JAACZH010000001.1"/>
</dbReference>
<dbReference type="SMR" id="A5F728"/>
<dbReference type="KEGG" id="vco:VC0395_A1468"/>
<dbReference type="KEGG" id="vcr:VC395_1992"/>
<dbReference type="PATRIC" id="fig|345073.21.peg.1925"/>
<dbReference type="eggNOG" id="COG1663">
    <property type="taxonomic scope" value="Bacteria"/>
</dbReference>
<dbReference type="HOGENOM" id="CLU_038816_2_0_6"/>
<dbReference type="UniPathway" id="UPA00359">
    <property type="reaction ID" value="UER00482"/>
</dbReference>
<dbReference type="Proteomes" id="UP000000249">
    <property type="component" value="Chromosome 2"/>
</dbReference>
<dbReference type="GO" id="GO:0005886">
    <property type="term" value="C:plasma membrane"/>
    <property type="evidence" value="ECO:0007669"/>
    <property type="project" value="TreeGrafter"/>
</dbReference>
<dbReference type="GO" id="GO:0005524">
    <property type="term" value="F:ATP binding"/>
    <property type="evidence" value="ECO:0007669"/>
    <property type="project" value="UniProtKB-UniRule"/>
</dbReference>
<dbReference type="GO" id="GO:0009029">
    <property type="term" value="F:tetraacyldisaccharide 4'-kinase activity"/>
    <property type="evidence" value="ECO:0007669"/>
    <property type="project" value="UniProtKB-UniRule"/>
</dbReference>
<dbReference type="GO" id="GO:0009245">
    <property type="term" value="P:lipid A biosynthetic process"/>
    <property type="evidence" value="ECO:0007669"/>
    <property type="project" value="UniProtKB-UniRule"/>
</dbReference>
<dbReference type="GO" id="GO:0009244">
    <property type="term" value="P:lipopolysaccharide core region biosynthetic process"/>
    <property type="evidence" value="ECO:0007669"/>
    <property type="project" value="TreeGrafter"/>
</dbReference>
<dbReference type="HAMAP" id="MF_00409">
    <property type="entry name" value="LpxK"/>
    <property type="match status" value="1"/>
</dbReference>
<dbReference type="InterPro" id="IPR003758">
    <property type="entry name" value="LpxK"/>
</dbReference>
<dbReference type="InterPro" id="IPR027417">
    <property type="entry name" value="P-loop_NTPase"/>
</dbReference>
<dbReference type="NCBIfam" id="TIGR00682">
    <property type="entry name" value="lpxK"/>
    <property type="match status" value="1"/>
</dbReference>
<dbReference type="PANTHER" id="PTHR42724">
    <property type="entry name" value="TETRAACYLDISACCHARIDE 4'-KINASE"/>
    <property type="match status" value="1"/>
</dbReference>
<dbReference type="PANTHER" id="PTHR42724:SF1">
    <property type="entry name" value="TETRAACYLDISACCHARIDE 4'-KINASE, MITOCHONDRIAL-RELATED"/>
    <property type="match status" value="1"/>
</dbReference>
<dbReference type="Pfam" id="PF02606">
    <property type="entry name" value="LpxK"/>
    <property type="match status" value="1"/>
</dbReference>
<dbReference type="SUPFAM" id="SSF52540">
    <property type="entry name" value="P-loop containing nucleoside triphosphate hydrolases"/>
    <property type="match status" value="1"/>
</dbReference>
<reference key="1">
    <citation type="submission" date="2007-03" db="EMBL/GenBank/DDBJ databases">
        <authorList>
            <person name="Heidelberg J."/>
        </authorList>
    </citation>
    <scope>NUCLEOTIDE SEQUENCE [LARGE SCALE GENOMIC DNA]</scope>
    <source>
        <strain>ATCC 39541 / Classical Ogawa 395 / O395</strain>
    </source>
</reference>
<reference key="2">
    <citation type="journal article" date="2008" name="PLoS ONE">
        <title>A recalibrated molecular clock and independent origins for the cholera pandemic clones.</title>
        <authorList>
            <person name="Feng L."/>
            <person name="Reeves P.R."/>
            <person name="Lan R."/>
            <person name="Ren Y."/>
            <person name="Gao C."/>
            <person name="Zhou Z."/>
            <person name="Ren Y."/>
            <person name="Cheng J."/>
            <person name="Wang W."/>
            <person name="Wang J."/>
            <person name="Qian W."/>
            <person name="Li D."/>
            <person name="Wang L."/>
        </authorList>
    </citation>
    <scope>NUCLEOTIDE SEQUENCE [LARGE SCALE GENOMIC DNA]</scope>
    <source>
        <strain>ATCC 39541 / Classical Ogawa 395 / O395</strain>
    </source>
</reference>
<feature type="chain" id="PRO_0000340866" description="Tetraacyldisaccharide 4'-kinase">
    <location>
        <begin position="1"/>
        <end position="335"/>
    </location>
</feature>
<feature type="binding site" evidence="1">
    <location>
        <begin position="59"/>
        <end position="66"/>
    </location>
    <ligand>
        <name>ATP</name>
        <dbReference type="ChEBI" id="CHEBI:30616"/>
    </ligand>
</feature>
<sequence>MIEKIWFHRHPLGYLLWPLLWPFSVLFGVISRSRRKAYQTGDKPSYRAPLPVVVVGNITAGGNGKTPVVVWLVETLQNLGYRPGVVSRGYGAKAPSYPLVVNEQTPAQHCGDEPKLIFQRTKAPVAVDPVRSQAVKALLEHGVNVIVTDDGLQHYALQRDIEIAVVDGVRRFGNQELIPLGPLREPVSRLDEVDFIITNGGVAKANEIAMRLQPTDAVNLKTGERCAVSKLTRLCAMAGIGHPSRFFNTLRELNADLVHCQGFADHQAFDAAQLNQLAQQGDHLIMTEKDAVKCAEFAQPNWWYLPVSAQFAPEAEQRIVDKIKEVMEPYGSPSA</sequence>
<protein>
    <recommendedName>
        <fullName evidence="1">Tetraacyldisaccharide 4'-kinase</fullName>
        <ecNumber evidence="1">2.7.1.130</ecNumber>
    </recommendedName>
    <alternativeName>
        <fullName evidence="1">Lipid A 4'-kinase</fullName>
    </alternativeName>
</protein>
<keyword id="KW-0067">ATP-binding</keyword>
<keyword id="KW-0418">Kinase</keyword>
<keyword id="KW-0441">Lipid A biosynthesis</keyword>
<keyword id="KW-0444">Lipid biosynthesis</keyword>
<keyword id="KW-0443">Lipid metabolism</keyword>
<keyword id="KW-0547">Nucleotide-binding</keyword>
<keyword id="KW-0808">Transferase</keyword>